<protein>
    <recommendedName>
        <fullName>Kelch-like protein 42</fullName>
    </recommendedName>
    <alternativeName>
        <fullName>Cullin-3-binding protein 9</fullName>
        <shortName>Ctb9</shortName>
    </alternativeName>
    <alternativeName>
        <fullName>Kelch domain-containing protein 5</fullName>
    </alternativeName>
</protein>
<feature type="chain" id="PRO_0000119128" description="Kelch-like protein 42">
    <location>
        <begin position="1"/>
        <end position="505"/>
    </location>
</feature>
<feature type="domain" description="BTB" evidence="1">
    <location>
        <begin position="5"/>
        <end position="78"/>
    </location>
</feature>
<feature type="repeat" description="Kelch 1">
    <location>
        <begin position="176"/>
        <end position="234"/>
    </location>
</feature>
<feature type="repeat" description="Kelch 2">
    <location>
        <begin position="235"/>
        <end position="282"/>
    </location>
</feature>
<feature type="repeat" description="Kelch 3">
    <location>
        <begin position="284"/>
        <end position="325"/>
    </location>
</feature>
<feature type="repeat" description="Kelch 4">
    <location>
        <begin position="327"/>
        <end position="372"/>
    </location>
</feature>
<feature type="repeat" description="Kelch 5">
    <location>
        <begin position="374"/>
        <end position="429"/>
    </location>
</feature>
<feature type="repeat" description="Kelch 6">
    <location>
        <begin position="431"/>
        <end position="480"/>
    </location>
</feature>
<feature type="modified residue" description="Phosphoserine" evidence="4">
    <location>
        <position position="43"/>
    </location>
</feature>
<comment type="function">
    <text evidence="2">Substrate-specific adapter of a BCR (BTB-CUL3-RBX1) E3 ubiquitin-protein ligase complex required for mitotic progression and cytokinesis. The BCR(KLHL42) E3 ubiquitin ligase complex mediates the ubiquitination and subsequent degradation of KATNA1. Involved in microtubule dynamics throughout mitosis.</text>
</comment>
<comment type="pathway">
    <text>Protein modification; protein ubiquitination.</text>
</comment>
<comment type="subunit">
    <text evidence="2">Component of the BCR(KLHL42) E3 ubiquitin ligase complex, at least composed of CUL3 and KLHL42. Interacts (via the BTB domain) with CUL3. Interacts (via the kelch domains) with KATNA1.</text>
</comment>
<comment type="interaction">
    <interactant intactId="EBI-739890">
        <id>Q9P2K6</id>
    </interactant>
    <interactant intactId="EBI-9089447">
        <id>Q96D30</id>
        <label>ADD1</label>
    </interactant>
    <organismsDiffer>false</organismsDiffer>
    <experiments>3</experiments>
</comment>
<comment type="interaction">
    <interactant intactId="EBI-739890">
        <id>Q9P2K6</id>
    </interactant>
    <interactant intactId="EBI-16746154">
        <id>Q7Z3H0-1</id>
        <label>ANKRD33</label>
    </interactant>
    <organismsDiffer>false</organismsDiffer>
    <experiments>3</experiments>
</comment>
<comment type="interaction">
    <interactant intactId="EBI-739890">
        <id>Q9P2K6</id>
    </interactant>
    <interactant intactId="EBI-739580">
        <id>Q13137</id>
        <label>CALCOCO2</label>
    </interactant>
    <organismsDiffer>false</organismsDiffer>
    <experiments>3</experiments>
</comment>
<comment type="interaction">
    <interactant intactId="EBI-739890">
        <id>Q9P2K6</id>
    </interactant>
    <interactant intactId="EBI-1773949">
        <id>Q9BXL8</id>
        <label>CDCA4</label>
    </interactant>
    <organismsDiffer>false</organismsDiffer>
    <experiments>3</experiments>
</comment>
<comment type="interaction">
    <interactant intactId="EBI-739890">
        <id>Q9P2K6</id>
    </interactant>
    <interactant intactId="EBI-712973">
        <id>P17540</id>
        <label>CKMT2</label>
    </interactant>
    <organismsDiffer>false</organismsDiffer>
    <experiments>3</experiments>
</comment>
<comment type="interaction">
    <interactant intactId="EBI-739890">
        <id>Q9P2K6</id>
    </interactant>
    <interactant intactId="EBI-6873363">
        <id>Q8WUE5</id>
        <label>CT55</label>
    </interactant>
    <organismsDiffer>false</organismsDiffer>
    <experiments>3</experiments>
</comment>
<comment type="interaction">
    <interactant intactId="EBI-739890">
        <id>Q9P2K6</id>
    </interactant>
    <interactant intactId="EBI-3908043">
        <id>P14920</id>
        <label>DAO</label>
    </interactant>
    <organismsDiffer>false</organismsDiffer>
    <experiments>3</experiments>
</comment>
<comment type="interaction">
    <interactant intactId="EBI-739890">
        <id>Q9P2K6</id>
    </interactant>
    <interactant intactId="EBI-724310">
        <id>Q15038</id>
        <label>DAZAP2</label>
    </interactant>
    <organismsDiffer>false</organismsDiffer>
    <experiments>3</experiments>
</comment>
<comment type="interaction">
    <interactant intactId="EBI-739890">
        <id>Q9P2K6</id>
    </interactant>
    <interactant intactId="EBI-748248">
        <id>Q8WTU0</id>
        <label>DDI1</label>
    </interactant>
    <organismsDiffer>false</organismsDiffer>
    <experiments>8</experiments>
</comment>
<comment type="interaction">
    <interactant intactId="EBI-739890">
        <id>Q9P2K6</id>
    </interactant>
    <interactant intactId="EBI-7957930">
        <id>Q92567</id>
        <label>FAM168A</label>
    </interactant>
    <organismsDiffer>false</organismsDiffer>
    <experiments>3</experiments>
</comment>
<comment type="interaction">
    <interactant intactId="EBI-739890">
        <id>Q9P2K6</id>
    </interactant>
    <interactant intactId="EBI-6509505">
        <id>Q0VD86</id>
        <label>INCA1</label>
    </interactant>
    <organismsDiffer>false</organismsDiffer>
    <experiments>3</experiments>
</comment>
<comment type="interaction">
    <interactant intactId="EBI-739890">
        <id>Q9P2K6</id>
    </interactant>
    <interactant intactId="EBI-12958461">
        <id>Q3LI73</id>
        <label>KRTAP19-4</label>
    </interactant>
    <organismsDiffer>false</organismsDiffer>
    <experiments>3</experiments>
</comment>
<comment type="interaction">
    <interactant intactId="EBI-739890">
        <id>Q9P2K6</id>
    </interactant>
    <interactant intactId="EBI-3906629">
        <id>P15173</id>
        <label>MYOG</label>
    </interactant>
    <organismsDiffer>false</organismsDiffer>
    <experiments>3</experiments>
</comment>
<comment type="interaction">
    <interactant intactId="EBI-739890">
        <id>Q9P2K6</id>
    </interactant>
    <interactant intactId="EBI-536879">
        <id>O43482</id>
        <label>OIP5</label>
    </interactant>
    <organismsDiffer>false</organismsDiffer>
    <experiments>3</experiments>
</comment>
<comment type="interaction">
    <interactant intactId="EBI-739890">
        <id>Q9P2K6</id>
    </interactant>
    <interactant intactId="EBI-395883">
        <id>P07237</id>
        <label>P4HB</label>
    </interactant>
    <organismsDiffer>false</organismsDiffer>
    <experiments>3</experiments>
</comment>
<comment type="interaction">
    <interactant intactId="EBI-739890">
        <id>Q9P2K6</id>
    </interactant>
    <interactant intactId="EBI-357275">
        <id>Q99471</id>
        <label>PFDN5</label>
    </interactant>
    <organismsDiffer>false</organismsDiffer>
    <experiments>3</experiments>
</comment>
<comment type="interaction">
    <interactant intactId="EBI-739890">
        <id>Q9P2K6</id>
    </interactant>
    <interactant intactId="EBI-12219503">
        <id>P01189</id>
        <label>POMC</label>
    </interactant>
    <organismsDiffer>false</organismsDiffer>
    <experiments>3</experiments>
</comment>
<comment type="interaction">
    <interactant intactId="EBI-739890">
        <id>Q9P2K6</id>
    </interactant>
    <interactant intactId="EBI-10829018">
        <id>Q04864-2</id>
        <label>REL</label>
    </interactant>
    <organismsDiffer>false</organismsDiffer>
    <experiments>3</experiments>
</comment>
<comment type="interaction">
    <interactant intactId="EBI-739890">
        <id>Q9P2K6</id>
    </interactant>
    <interactant intactId="EBI-748601">
        <id>Q9UHV2</id>
        <label>SERTAD1</label>
    </interactant>
    <organismsDiffer>false</organismsDiffer>
    <experiments>4</experiments>
</comment>
<comment type="interaction">
    <interactant intactId="EBI-739890">
        <id>Q9P2K6</id>
    </interactant>
    <interactant intactId="EBI-748621">
        <id>Q9UJW9</id>
        <label>SERTAD3</label>
    </interactant>
    <organismsDiffer>false</organismsDiffer>
    <experiments>3</experiments>
</comment>
<comment type="interaction">
    <interactant intactId="EBI-739890">
        <id>Q9P2K6</id>
    </interactant>
    <interactant intactId="EBI-2212028">
        <id>Q9Y2D8</id>
        <label>SSX2IP</label>
    </interactant>
    <organismsDiffer>false</organismsDiffer>
    <experiments>3</experiments>
</comment>
<comment type="interaction">
    <interactant intactId="EBI-739890">
        <id>Q9P2K6</id>
    </interactant>
    <interactant intactId="EBI-373258">
        <id>O75886</id>
        <label>STAM2</label>
    </interactant>
    <organismsDiffer>false</organismsDiffer>
    <experiments>6</experiments>
</comment>
<comment type="interaction">
    <interactant intactId="EBI-739890">
        <id>Q9P2K6</id>
    </interactant>
    <interactant intactId="EBI-10318905">
        <id>Q08AL9</id>
        <label>STXBP4</label>
    </interactant>
    <organismsDiffer>false</organismsDiffer>
    <experiments>3</experiments>
</comment>
<comment type="interaction">
    <interactant intactId="EBI-739890">
        <id>Q9P2K6</id>
    </interactant>
    <interactant intactId="EBI-740098">
        <id>P36406</id>
        <label>TRIM23</label>
    </interactant>
    <organismsDiffer>false</organismsDiffer>
    <experiments>6</experiments>
</comment>
<comment type="interaction">
    <interactant intactId="EBI-739890">
        <id>Q9P2K6</id>
    </interactant>
    <interactant intactId="EBI-2130429">
        <id>Q9BYV2</id>
        <label>TRIM54</label>
    </interactant>
    <organismsDiffer>false</organismsDiffer>
    <experiments>3</experiments>
</comment>
<comment type="interaction">
    <interactant intactId="EBI-739890">
        <id>Q9P2K6</id>
    </interactant>
    <interactant intactId="EBI-9090990">
        <id>Q5W5X9-3</id>
        <label>TTC23</label>
    </interactant>
    <organismsDiffer>false</organismsDiffer>
    <experiments>3</experiments>
</comment>
<comment type="interaction">
    <interactant intactId="EBI-739890">
        <id>Q9P2K6</id>
    </interactant>
    <interactant intactId="EBI-741480">
        <id>Q9UMX0</id>
        <label>UBQLN1</label>
    </interactant>
    <organismsDiffer>false</organismsDiffer>
    <experiments>4</experiments>
</comment>
<comment type="interaction">
    <interactant intactId="EBI-739890">
        <id>Q9P2K6</id>
    </interactant>
    <interactant intactId="EBI-10173939">
        <id>Q9UMX0-2</id>
        <label>UBQLN1</label>
    </interactant>
    <organismsDiffer>false</organismsDiffer>
    <experiments>3</experiments>
</comment>
<comment type="interaction">
    <interactant intactId="EBI-739890">
        <id>Q9P2K6</id>
    </interactant>
    <interactant intactId="EBI-947187">
        <id>Q9UHD9</id>
        <label>UBQLN2</label>
    </interactant>
    <organismsDiffer>false</organismsDiffer>
    <experiments>5</experiments>
</comment>
<comment type="interaction">
    <interactant intactId="EBI-739890">
        <id>Q9P2K6</id>
    </interactant>
    <interactant intactId="EBI-2799833">
        <id>Q8N1B4</id>
        <label>VPS52</label>
    </interactant>
    <organismsDiffer>false</organismsDiffer>
    <experiments>3</experiments>
</comment>
<comment type="subcellular location">
    <subcellularLocation>
        <location evidence="2">Cytoplasm</location>
    </subcellularLocation>
    <subcellularLocation>
        <location evidence="2">Cytoplasm</location>
        <location evidence="2">Cytoskeleton</location>
        <location evidence="2">Spindle</location>
    </subcellularLocation>
    <text>Predominantly in mitotic cells. Localized diffusely in the cytoplasm during the interphase. During metaphase is localized throughout the cell and more widely dispersed than the microtubules. In anaphase cells is localized between the two sets of separated chromosomes as well as at the spindle poles. During telophase is localized arround the nuclei of the two daughter cells. Not detected at the midbody region during cytokinesis.</text>
</comment>
<comment type="induction">
    <text evidence="2">Up-regulated during mitosis.</text>
</comment>
<comment type="sequence caution" evidence="3">
    <conflict type="erroneous initiation">
        <sequence resource="EMBL-CDS" id="AAH28742"/>
    </conflict>
    <text>Extended N-terminus.</text>
</comment>
<gene>
    <name type="primary">KLHL42</name>
    <name type="synonym">KIAA1340</name>
    <name type="synonym">KLHDC5</name>
</gene>
<reference key="1">
    <citation type="journal article" date="2006" name="Nature">
        <title>The finished DNA sequence of human chromosome 12.</title>
        <authorList>
            <person name="Scherer S.E."/>
            <person name="Muzny D.M."/>
            <person name="Buhay C.J."/>
            <person name="Chen R."/>
            <person name="Cree A."/>
            <person name="Ding Y."/>
            <person name="Dugan-Rocha S."/>
            <person name="Gill R."/>
            <person name="Gunaratne P."/>
            <person name="Harris R.A."/>
            <person name="Hawes A.C."/>
            <person name="Hernandez J."/>
            <person name="Hodgson A.V."/>
            <person name="Hume J."/>
            <person name="Jackson A."/>
            <person name="Khan Z.M."/>
            <person name="Kovar-Smith C."/>
            <person name="Lewis L.R."/>
            <person name="Lozado R.J."/>
            <person name="Metzker M.L."/>
            <person name="Milosavljevic A."/>
            <person name="Miner G.R."/>
            <person name="Montgomery K.T."/>
            <person name="Morgan M.B."/>
            <person name="Nazareth L.V."/>
            <person name="Scott G."/>
            <person name="Sodergren E."/>
            <person name="Song X.-Z."/>
            <person name="Steffen D."/>
            <person name="Lovering R.C."/>
            <person name="Wheeler D.A."/>
            <person name="Worley K.C."/>
            <person name="Yuan Y."/>
            <person name="Zhang Z."/>
            <person name="Adams C.Q."/>
            <person name="Ansari-Lari M.A."/>
            <person name="Ayele M."/>
            <person name="Brown M.J."/>
            <person name="Chen G."/>
            <person name="Chen Z."/>
            <person name="Clerc-Blankenburg K.P."/>
            <person name="Davis C."/>
            <person name="Delgado O."/>
            <person name="Dinh H.H."/>
            <person name="Draper H."/>
            <person name="Gonzalez-Garay M.L."/>
            <person name="Havlak P."/>
            <person name="Jackson L.R."/>
            <person name="Jacob L.S."/>
            <person name="Kelly S.H."/>
            <person name="Li L."/>
            <person name="Li Z."/>
            <person name="Liu J."/>
            <person name="Liu W."/>
            <person name="Lu J."/>
            <person name="Maheshwari M."/>
            <person name="Nguyen B.-V."/>
            <person name="Okwuonu G.O."/>
            <person name="Pasternak S."/>
            <person name="Perez L.M."/>
            <person name="Plopper F.J.H."/>
            <person name="Santibanez J."/>
            <person name="Shen H."/>
            <person name="Tabor P.E."/>
            <person name="Verduzco D."/>
            <person name="Waldron L."/>
            <person name="Wang Q."/>
            <person name="Williams G.A."/>
            <person name="Zhang J."/>
            <person name="Zhou J."/>
            <person name="Allen C.C."/>
            <person name="Amin A.G."/>
            <person name="Anyalebechi V."/>
            <person name="Bailey M."/>
            <person name="Barbaria J.A."/>
            <person name="Bimage K.E."/>
            <person name="Bryant N.P."/>
            <person name="Burch P.E."/>
            <person name="Burkett C.E."/>
            <person name="Burrell K.L."/>
            <person name="Calderon E."/>
            <person name="Cardenas V."/>
            <person name="Carter K."/>
            <person name="Casias K."/>
            <person name="Cavazos I."/>
            <person name="Cavazos S.R."/>
            <person name="Ceasar H."/>
            <person name="Chacko J."/>
            <person name="Chan S.N."/>
            <person name="Chavez D."/>
            <person name="Christopoulos C."/>
            <person name="Chu J."/>
            <person name="Cockrell R."/>
            <person name="Cox C.D."/>
            <person name="Dang M."/>
            <person name="Dathorne S.R."/>
            <person name="David R."/>
            <person name="Davis C.M."/>
            <person name="Davy-Carroll L."/>
            <person name="Deshazo D.R."/>
            <person name="Donlin J.E."/>
            <person name="D'Souza L."/>
            <person name="Eaves K.A."/>
            <person name="Egan A."/>
            <person name="Emery-Cohen A.J."/>
            <person name="Escotto M."/>
            <person name="Flagg N."/>
            <person name="Forbes L.D."/>
            <person name="Gabisi A.M."/>
            <person name="Garza M."/>
            <person name="Hamilton C."/>
            <person name="Henderson N."/>
            <person name="Hernandez O."/>
            <person name="Hines S."/>
            <person name="Hogues M.E."/>
            <person name="Huang M."/>
            <person name="Idlebird D.G."/>
            <person name="Johnson R."/>
            <person name="Jolivet A."/>
            <person name="Jones S."/>
            <person name="Kagan R."/>
            <person name="King L.M."/>
            <person name="Leal B."/>
            <person name="Lebow H."/>
            <person name="Lee S."/>
            <person name="LeVan J.M."/>
            <person name="Lewis L.C."/>
            <person name="London P."/>
            <person name="Lorensuhewa L.M."/>
            <person name="Loulseged H."/>
            <person name="Lovett D.A."/>
            <person name="Lucier A."/>
            <person name="Lucier R.L."/>
            <person name="Ma J."/>
            <person name="Madu R.C."/>
            <person name="Mapua P."/>
            <person name="Martindale A.D."/>
            <person name="Martinez E."/>
            <person name="Massey E."/>
            <person name="Mawhiney S."/>
            <person name="Meador M.G."/>
            <person name="Mendez S."/>
            <person name="Mercado C."/>
            <person name="Mercado I.C."/>
            <person name="Merritt C.E."/>
            <person name="Miner Z.L."/>
            <person name="Minja E."/>
            <person name="Mitchell T."/>
            <person name="Mohabbat F."/>
            <person name="Mohabbat K."/>
            <person name="Montgomery B."/>
            <person name="Moore N."/>
            <person name="Morris S."/>
            <person name="Munidasa M."/>
            <person name="Ngo R.N."/>
            <person name="Nguyen N.B."/>
            <person name="Nickerson E."/>
            <person name="Nwaokelemeh O.O."/>
            <person name="Nwokenkwo S."/>
            <person name="Obregon M."/>
            <person name="Oguh M."/>
            <person name="Oragunye N."/>
            <person name="Oviedo R.J."/>
            <person name="Parish B.J."/>
            <person name="Parker D.N."/>
            <person name="Parrish J."/>
            <person name="Parks K.L."/>
            <person name="Paul H.A."/>
            <person name="Payton B.A."/>
            <person name="Perez A."/>
            <person name="Perrin W."/>
            <person name="Pickens A."/>
            <person name="Primus E.L."/>
            <person name="Pu L.-L."/>
            <person name="Puazo M."/>
            <person name="Quiles M.M."/>
            <person name="Quiroz J.B."/>
            <person name="Rabata D."/>
            <person name="Reeves K."/>
            <person name="Ruiz S.J."/>
            <person name="Shao H."/>
            <person name="Sisson I."/>
            <person name="Sonaike T."/>
            <person name="Sorelle R.P."/>
            <person name="Sutton A.E."/>
            <person name="Svatek A.F."/>
            <person name="Svetz L.A."/>
            <person name="Tamerisa K.S."/>
            <person name="Taylor T.R."/>
            <person name="Teague B."/>
            <person name="Thomas N."/>
            <person name="Thorn R.D."/>
            <person name="Trejos Z.Y."/>
            <person name="Trevino B.K."/>
            <person name="Ukegbu O.N."/>
            <person name="Urban J.B."/>
            <person name="Vasquez L.I."/>
            <person name="Vera V.A."/>
            <person name="Villasana D.M."/>
            <person name="Wang L."/>
            <person name="Ward-Moore S."/>
            <person name="Warren J.T."/>
            <person name="Wei X."/>
            <person name="White F."/>
            <person name="Williamson A.L."/>
            <person name="Wleczyk R."/>
            <person name="Wooden H.S."/>
            <person name="Wooden S.H."/>
            <person name="Yen J."/>
            <person name="Yoon L."/>
            <person name="Yoon V."/>
            <person name="Zorrilla S.E."/>
            <person name="Nelson D."/>
            <person name="Kucherlapati R."/>
            <person name="Weinstock G."/>
            <person name="Gibbs R.A."/>
        </authorList>
    </citation>
    <scope>NUCLEOTIDE SEQUENCE [LARGE SCALE GENOMIC DNA]</scope>
</reference>
<reference key="2">
    <citation type="journal article" date="2004" name="Genome Res.">
        <title>The status, quality, and expansion of the NIH full-length cDNA project: the Mammalian Gene Collection (MGC).</title>
        <authorList>
            <consortium name="The MGC Project Team"/>
        </authorList>
    </citation>
    <scope>NUCLEOTIDE SEQUENCE [LARGE SCALE MRNA]</scope>
    <source>
        <tissue>Brain</tissue>
        <tissue>Uterus</tissue>
    </source>
</reference>
<reference key="3">
    <citation type="journal article" date="2000" name="DNA Res.">
        <title>Prediction of the coding sequences of unidentified human genes. XVI. The complete sequences of 150 new cDNA clones from brain which code for large proteins in vitro.</title>
        <authorList>
            <person name="Nagase T."/>
            <person name="Kikuno R."/>
            <person name="Ishikawa K."/>
            <person name="Hirosawa M."/>
            <person name="Ohara O."/>
        </authorList>
    </citation>
    <scope>NUCLEOTIDE SEQUENCE [LARGE SCALE MRNA] OF 65-505</scope>
    <source>
        <tissue>Brain</tissue>
    </source>
</reference>
<reference key="4">
    <citation type="journal article" date="2007" name="Science">
        <title>ATM and ATR substrate analysis reveals extensive protein networks responsive to DNA damage.</title>
        <authorList>
            <person name="Matsuoka S."/>
            <person name="Ballif B.A."/>
            <person name="Smogorzewska A."/>
            <person name="McDonald E.R. III"/>
            <person name="Hurov K.E."/>
            <person name="Luo J."/>
            <person name="Bakalarski C.E."/>
            <person name="Zhao Z."/>
            <person name="Solimini N."/>
            <person name="Lerenthal Y."/>
            <person name="Shiloh Y."/>
            <person name="Gygi S.P."/>
            <person name="Elledge S.J."/>
        </authorList>
    </citation>
    <scope>PHOSPHORYLATION [LARGE SCALE ANALYSIS] AT SER-43</scope>
    <scope>IDENTIFICATION BY MASS SPECTROMETRY [LARGE SCALE ANALYSIS]</scope>
    <source>
        <tissue>Embryonic kidney</tissue>
    </source>
</reference>
<reference key="5">
    <citation type="journal article" date="2009" name="J. Biol. Chem.">
        <title>The Cul3/Klhdc5 E3 ligase regulates p60/katanin and is required for normal mitosis in mammalian cells.</title>
        <authorList>
            <person name="Cummings C.M."/>
            <person name="Bentley C.A."/>
            <person name="Perdue S.A."/>
            <person name="Baas P.W."/>
            <person name="Singer J.D."/>
        </authorList>
    </citation>
    <scope>IDENTIFICATION IN THE BCR(KLHL42) COMPLEX</scope>
    <scope>FUNCTION</scope>
    <scope>INTERACTION WITH CUL3 AND KATNA1</scope>
    <scope>INDUCTION</scope>
    <scope>SUBCELLULAR LOCATION</scope>
</reference>
<keyword id="KW-0131">Cell cycle</keyword>
<keyword id="KW-0132">Cell division</keyword>
<keyword id="KW-0963">Cytoplasm</keyword>
<keyword id="KW-0206">Cytoskeleton</keyword>
<keyword id="KW-0880">Kelch repeat</keyword>
<keyword id="KW-0498">Mitosis</keyword>
<keyword id="KW-0597">Phosphoprotein</keyword>
<keyword id="KW-1267">Proteomics identification</keyword>
<keyword id="KW-1185">Reference proteome</keyword>
<keyword id="KW-0677">Repeat</keyword>
<keyword id="KW-0833">Ubl conjugation pathway</keyword>
<organism>
    <name type="scientific">Homo sapiens</name>
    <name type="common">Human</name>
    <dbReference type="NCBI Taxonomy" id="9606"/>
    <lineage>
        <taxon>Eukaryota</taxon>
        <taxon>Metazoa</taxon>
        <taxon>Chordata</taxon>
        <taxon>Craniata</taxon>
        <taxon>Vertebrata</taxon>
        <taxon>Euteleostomi</taxon>
        <taxon>Mammalia</taxon>
        <taxon>Eutheria</taxon>
        <taxon>Euarchontoglires</taxon>
        <taxon>Primates</taxon>
        <taxon>Haplorrhini</taxon>
        <taxon>Catarrhini</taxon>
        <taxon>Hominidae</taxon>
        <taxon>Homo</taxon>
    </lineage>
</organism>
<accession>Q9P2K6</accession>
<accession>Q2VPK1</accession>
<accession>Q8N334</accession>
<sequence>MSAEEMVQIRLEDRCYPVSKRKLIEQSDYFRALYRSGMREALSQEAGGPEVQQLRGLSAPGLRLVLDFINAGGAREGWLLGPRGEKGGGVDEDEEMDEVSLLSELVEAASFLQVTSLLQLLLSQVRLNNCLEMYRLAQVYGLPDLQEACLRFMVVHFHEVLCKPQFHLLGSPPQAPGDVSLKQRLREARMTGTPVLVALGDFLGGPLAPHPYQGEPPSMLRYEEMTERWFPLANNLPPDLVNVRGYGSAILDNYLFIVGGYRITSQEISAAHSYNPSTNEWLQVASMNQKRSNFKLVAVNSKLYAIGGQAVSNVECYNPEQDAWNFVAPLPNPLAEFSACECKGKIYVIGGYTTRDRNMNILQYCPSSDMWTLFETCDVHIRKQQMVSVEETIYIVGGCLHELGPNRRSSQSEDMLTVQSYNTVTRQWLYLKENTSKSGLNLTCALHNDGIYIMSRDVTLSTSLEHRVFLKYNIFSDSWEAFRRFPAFGHNLLVSSLYLPNKAET</sequence>
<dbReference type="EMBL" id="AC009511">
    <property type="status" value="NOT_ANNOTATED_CDS"/>
    <property type="molecule type" value="Genomic_DNA"/>
</dbReference>
<dbReference type="EMBL" id="BC108669">
    <property type="protein sequence ID" value="AAI08670.1"/>
    <property type="molecule type" value="mRNA"/>
</dbReference>
<dbReference type="EMBL" id="BC028742">
    <property type="protein sequence ID" value="AAH28742.2"/>
    <property type="status" value="ALT_INIT"/>
    <property type="molecule type" value="mRNA"/>
</dbReference>
<dbReference type="EMBL" id="AB037761">
    <property type="protein sequence ID" value="BAA92578.1"/>
    <property type="molecule type" value="mRNA"/>
</dbReference>
<dbReference type="CCDS" id="CCDS31763.1"/>
<dbReference type="RefSeq" id="NP_065833.1">
    <property type="nucleotide sequence ID" value="NM_020782.2"/>
</dbReference>
<dbReference type="SMR" id="Q9P2K6"/>
<dbReference type="BioGRID" id="121601">
    <property type="interactions" value="95"/>
</dbReference>
<dbReference type="ComplexPortal" id="CPX-8263">
    <property type="entry name" value="CRL3 E3 ubiquitin ligase complex, KLHL42 variant"/>
</dbReference>
<dbReference type="CORUM" id="Q9P2K6"/>
<dbReference type="FunCoup" id="Q9P2K6">
    <property type="interactions" value="214"/>
</dbReference>
<dbReference type="IntAct" id="Q9P2K6">
    <property type="interactions" value="83"/>
</dbReference>
<dbReference type="MINT" id="Q9P2K6"/>
<dbReference type="STRING" id="9606.ENSP00000370671"/>
<dbReference type="GlyCosmos" id="Q9P2K6">
    <property type="glycosylation" value="1 site, 1 glycan"/>
</dbReference>
<dbReference type="GlyGen" id="Q9P2K6">
    <property type="glycosylation" value="1 site, 1 O-linked glycan (1 site)"/>
</dbReference>
<dbReference type="iPTMnet" id="Q9P2K6"/>
<dbReference type="PhosphoSitePlus" id="Q9P2K6"/>
<dbReference type="BioMuta" id="KLHL42"/>
<dbReference type="DMDM" id="84028217"/>
<dbReference type="jPOST" id="Q9P2K6"/>
<dbReference type="MassIVE" id="Q9P2K6"/>
<dbReference type="PaxDb" id="9606-ENSP00000370671"/>
<dbReference type="PeptideAtlas" id="Q9P2K6"/>
<dbReference type="ProteomicsDB" id="83837"/>
<dbReference type="Pumba" id="Q9P2K6"/>
<dbReference type="Antibodypedia" id="12736">
    <property type="antibodies" value="125 antibodies from 26 providers"/>
</dbReference>
<dbReference type="DNASU" id="57542"/>
<dbReference type="Ensembl" id="ENST00000381271.7">
    <property type="protein sequence ID" value="ENSP00000370671.2"/>
    <property type="gene ID" value="ENSG00000087448.11"/>
</dbReference>
<dbReference type="GeneID" id="57542"/>
<dbReference type="KEGG" id="hsa:57542"/>
<dbReference type="MANE-Select" id="ENST00000381271.7">
    <property type="protein sequence ID" value="ENSP00000370671.2"/>
    <property type="RefSeq nucleotide sequence ID" value="NM_020782.2"/>
    <property type="RefSeq protein sequence ID" value="NP_065833.1"/>
</dbReference>
<dbReference type="UCSC" id="uc001rij.4">
    <property type="organism name" value="human"/>
</dbReference>
<dbReference type="AGR" id="HGNC:29252"/>
<dbReference type="CTD" id="57542"/>
<dbReference type="DisGeNET" id="57542"/>
<dbReference type="GeneCards" id="KLHL42"/>
<dbReference type="HGNC" id="HGNC:29252">
    <property type="gene designation" value="KLHL42"/>
</dbReference>
<dbReference type="HPA" id="ENSG00000087448">
    <property type="expression patterns" value="Low tissue specificity"/>
</dbReference>
<dbReference type="MIM" id="618919">
    <property type="type" value="gene"/>
</dbReference>
<dbReference type="neXtProt" id="NX_Q9P2K6"/>
<dbReference type="OpenTargets" id="ENSG00000087448"/>
<dbReference type="PharmGKB" id="PA142671579"/>
<dbReference type="VEuPathDB" id="HostDB:ENSG00000087448"/>
<dbReference type="eggNOG" id="KOG1072">
    <property type="taxonomic scope" value="Eukaryota"/>
</dbReference>
<dbReference type="GeneTree" id="ENSGT00940000160124"/>
<dbReference type="HOGENOM" id="CLU_021248_1_0_1"/>
<dbReference type="InParanoid" id="Q9P2K6"/>
<dbReference type="OMA" id="SDTWTVF"/>
<dbReference type="OrthoDB" id="45365at2759"/>
<dbReference type="PAN-GO" id="Q9P2K6">
    <property type="GO annotations" value="4 GO annotations based on evolutionary models"/>
</dbReference>
<dbReference type="PhylomeDB" id="Q9P2K6"/>
<dbReference type="TreeFam" id="TF328485"/>
<dbReference type="PathwayCommons" id="Q9P2K6"/>
<dbReference type="Reactome" id="R-HSA-8951664">
    <property type="pathway name" value="Neddylation"/>
</dbReference>
<dbReference type="Reactome" id="R-HSA-983168">
    <property type="pathway name" value="Antigen processing: Ubiquitination &amp; Proteasome degradation"/>
</dbReference>
<dbReference type="SignaLink" id="Q9P2K6"/>
<dbReference type="SIGNOR" id="Q9P2K6"/>
<dbReference type="UniPathway" id="UPA00143"/>
<dbReference type="BioGRID-ORCS" id="57542">
    <property type="hits" value="21 hits in 1197 CRISPR screens"/>
</dbReference>
<dbReference type="ChiTaRS" id="KLHL42">
    <property type="organism name" value="human"/>
</dbReference>
<dbReference type="GenomeRNAi" id="57542"/>
<dbReference type="Pharos" id="Q9P2K6">
    <property type="development level" value="Tbio"/>
</dbReference>
<dbReference type="PRO" id="PR:Q9P2K6"/>
<dbReference type="Proteomes" id="UP000005640">
    <property type="component" value="Chromosome 12"/>
</dbReference>
<dbReference type="RNAct" id="Q9P2K6">
    <property type="molecule type" value="protein"/>
</dbReference>
<dbReference type="Bgee" id="ENSG00000087448">
    <property type="expression patterns" value="Expressed in endothelial cell and 189 other cell types or tissues"/>
</dbReference>
<dbReference type="ExpressionAtlas" id="Q9P2K6">
    <property type="expression patterns" value="baseline and differential"/>
</dbReference>
<dbReference type="GO" id="GO:0031463">
    <property type="term" value="C:Cul3-RING ubiquitin ligase complex"/>
    <property type="evidence" value="ECO:0000314"/>
    <property type="project" value="UniProtKB"/>
</dbReference>
<dbReference type="GO" id="GO:0005829">
    <property type="term" value="C:cytosol"/>
    <property type="evidence" value="ECO:0000304"/>
    <property type="project" value="Reactome"/>
</dbReference>
<dbReference type="GO" id="GO:0005819">
    <property type="term" value="C:spindle"/>
    <property type="evidence" value="ECO:0007669"/>
    <property type="project" value="UniProtKB-SubCell"/>
</dbReference>
<dbReference type="GO" id="GO:0051301">
    <property type="term" value="P:cell division"/>
    <property type="evidence" value="ECO:0007669"/>
    <property type="project" value="UniProtKB-KW"/>
</dbReference>
<dbReference type="GO" id="GO:0043161">
    <property type="term" value="P:proteasome-mediated ubiquitin-dependent protein catabolic process"/>
    <property type="evidence" value="ECO:0000314"/>
    <property type="project" value="UniProtKB"/>
</dbReference>
<dbReference type="GO" id="GO:0000209">
    <property type="term" value="P:protein polyubiquitination"/>
    <property type="evidence" value="ECO:0000314"/>
    <property type="project" value="UniProtKB"/>
</dbReference>
<dbReference type="GO" id="GO:0032886">
    <property type="term" value="P:regulation of microtubule-based process"/>
    <property type="evidence" value="ECO:0000315"/>
    <property type="project" value="UniProtKB"/>
</dbReference>
<dbReference type="CDD" id="cd18478">
    <property type="entry name" value="BACK_KLHL42_KLHDC5"/>
    <property type="match status" value="1"/>
</dbReference>
<dbReference type="CDD" id="cd18319">
    <property type="entry name" value="BTB_POZ_KLHL42"/>
    <property type="match status" value="1"/>
</dbReference>
<dbReference type="FunFam" id="2.120.10.80:FF:000048">
    <property type="entry name" value="Kelch-like family, member 42"/>
    <property type="match status" value="1"/>
</dbReference>
<dbReference type="FunFam" id="3.30.710.10:FF:000079">
    <property type="entry name" value="Kelch-like family, member 42"/>
    <property type="match status" value="1"/>
</dbReference>
<dbReference type="Gene3D" id="2.120.10.80">
    <property type="entry name" value="Kelch-type beta propeller"/>
    <property type="match status" value="1"/>
</dbReference>
<dbReference type="Gene3D" id="3.30.710.10">
    <property type="entry name" value="Potassium Channel Kv1.1, Chain A"/>
    <property type="match status" value="1"/>
</dbReference>
<dbReference type="InterPro" id="IPR011705">
    <property type="entry name" value="BACK"/>
</dbReference>
<dbReference type="InterPro" id="IPR056737">
    <property type="entry name" value="Beta-prop_ATRN-MKLN-like"/>
</dbReference>
<dbReference type="InterPro" id="IPR000210">
    <property type="entry name" value="BTB/POZ_dom"/>
</dbReference>
<dbReference type="InterPro" id="IPR052392">
    <property type="entry name" value="Kelch-BTB_domain-containing"/>
</dbReference>
<dbReference type="InterPro" id="IPR015915">
    <property type="entry name" value="Kelch-typ_b-propeller"/>
</dbReference>
<dbReference type="InterPro" id="IPR006652">
    <property type="entry name" value="Kelch_1"/>
</dbReference>
<dbReference type="InterPro" id="IPR044727">
    <property type="entry name" value="KLHL42_BACK"/>
</dbReference>
<dbReference type="InterPro" id="IPR011333">
    <property type="entry name" value="SKP1/BTB/POZ_sf"/>
</dbReference>
<dbReference type="PANTHER" id="PTHR46375">
    <property type="entry name" value="KELCH REPEAT AND BTB DOMAIN-CONTAINING PROTEIN 13-RELATED"/>
    <property type="match status" value="1"/>
</dbReference>
<dbReference type="PANTHER" id="PTHR46375:SF4">
    <property type="entry name" value="KELCH-LIKE FAMILY, MEMBER 42"/>
    <property type="match status" value="1"/>
</dbReference>
<dbReference type="Pfam" id="PF07707">
    <property type="entry name" value="BACK"/>
    <property type="match status" value="1"/>
</dbReference>
<dbReference type="Pfam" id="PF24981">
    <property type="entry name" value="Beta-prop_ATRN-LZTR1"/>
    <property type="match status" value="1"/>
</dbReference>
<dbReference type="SMART" id="SM00612">
    <property type="entry name" value="Kelch"/>
    <property type="match status" value="3"/>
</dbReference>
<dbReference type="SUPFAM" id="SSF117281">
    <property type="entry name" value="Kelch motif"/>
    <property type="match status" value="1"/>
</dbReference>
<dbReference type="SUPFAM" id="SSF54695">
    <property type="entry name" value="POZ domain"/>
    <property type="match status" value="1"/>
</dbReference>
<dbReference type="PROSITE" id="PS50097">
    <property type="entry name" value="BTB"/>
    <property type="match status" value="1"/>
</dbReference>
<proteinExistence type="evidence at protein level"/>
<name>KLH42_HUMAN</name>
<evidence type="ECO:0000255" key="1">
    <source>
        <dbReference type="PROSITE-ProRule" id="PRU00037"/>
    </source>
</evidence>
<evidence type="ECO:0000269" key="2">
    <source>
    </source>
</evidence>
<evidence type="ECO:0000305" key="3"/>
<evidence type="ECO:0007744" key="4">
    <source>
    </source>
</evidence>